<accession>Q6GQ70</accession>
<accession>Q7ZYU1</accession>
<accession>Q8JFZ0</accession>
<sequence length="320" mass="35352">MSSAPASGGLRLLVCFLGVFVCYFYYGILQETITRRTYGEGEKQEKFRFALSLVFVQCIVNALFAKLLIQCFDSGKTDRTQSWLYSACSLSYLGAMVSSNSALQFVNYPTQVLGKSCKPIPVMLLGVTLLRKKYPLTKYLCVLLIVFGVALFMYKPKTGSGDGDHTVGYGELLLLLSLTLDGLTGVSQDYMRAHFQTGSNHMMLSINLWSSLFLGAGIVLTGELWDFLSFTERYPSIVYNIVLFSLTSALGQTFIFMTVVYFGPLTCSIITTTRKFFTILASVILFSNPISSIQWVGTLLVFLGLGLDATYGKGSKKPSH</sequence>
<proteinExistence type="evidence at transcript level"/>
<gene>
    <name type="primary">slc35b1</name>
    <name type="synonym">ernst1</name>
</gene>
<organism>
    <name type="scientific">Xenopus laevis</name>
    <name type="common">African clawed frog</name>
    <dbReference type="NCBI Taxonomy" id="8355"/>
    <lineage>
        <taxon>Eukaryota</taxon>
        <taxon>Metazoa</taxon>
        <taxon>Chordata</taxon>
        <taxon>Craniata</taxon>
        <taxon>Vertebrata</taxon>
        <taxon>Euteleostomi</taxon>
        <taxon>Amphibia</taxon>
        <taxon>Batrachia</taxon>
        <taxon>Anura</taxon>
        <taxon>Pipoidea</taxon>
        <taxon>Pipidae</taxon>
        <taxon>Xenopodinae</taxon>
        <taxon>Xenopus</taxon>
        <taxon>Xenopus</taxon>
    </lineage>
</organism>
<comment type="function">
    <text evidence="1">Probable sugar transporter.</text>
</comment>
<comment type="subcellular location">
    <subcellularLocation>
        <location evidence="3">Endoplasmic reticulum membrane</location>
        <topology evidence="3">Multi-pass membrane protein</topology>
    </subcellularLocation>
</comment>
<comment type="domain">
    <text evidence="1">The di-lysine motif confers endoplasmic reticulum localization for type I membrane proteins.</text>
</comment>
<comment type="similarity">
    <text evidence="3">Belongs to the nucleotide-sugar transporter family. SLC35B subfamily.</text>
</comment>
<comment type="sequence caution" evidence="3">
    <conflict type="erroneous initiation">
        <sequence resource="EMBL-CDS" id="AAH41278"/>
    </conflict>
</comment>
<dbReference type="EMBL" id="AJ506039">
    <property type="protein sequence ID" value="CAD44563.1"/>
    <property type="molecule type" value="mRNA"/>
</dbReference>
<dbReference type="EMBL" id="BC041278">
    <property type="protein sequence ID" value="AAH41278.1"/>
    <property type="status" value="ALT_INIT"/>
    <property type="molecule type" value="mRNA"/>
</dbReference>
<dbReference type="EMBL" id="BC072878">
    <property type="protein sequence ID" value="AAH72878.1"/>
    <property type="molecule type" value="mRNA"/>
</dbReference>
<dbReference type="EMBL" id="BC077624">
    <property type="protein sequence ID" value="AAH77624.1"/>
    <property type="molecule type" value="mRNA"/>
</dbReference>
<dbReference type="RefSeq" id="NP_001082304.1">
    <property type="nucleotide sequence ID" value="NM_001088835.1"/>
</dbReference>
<dbReference type="RefSeq" id="NP_001082421.1">
    <property type="nucleotide sequence ID" value="NM_001088952.1"/>
</dbReference>
<dbReference type="SMR" id="Q6GQ70"/>
<dbReference type="DNASU" id="398458"/>
<dbReference type="GeneID" id="398458"/>
<dbReference type="KEGG" id="xla:398458"/>
<dbReference type="AGR" id="Xenbase:XB-GENE-972783"/>
<dbReference type="CTD" id="398458"/>
<dbReference type="Xenbase" id="XB-GENE-972783">
    <property type="gene designation" value="slc35b1.L"/>
</dbReference>
<dbReference type="OrthoDB" id="78344at2759"/>
<dbReference type="Proteomes" id="UP000186698">
    <property type="component" value="Chromosome 9_10L"/>
</dbReference>
<dbReference type="Bgee" id="398458">
    <property type="expression patterns" value="Expressed in liver and 19 other cell types or tissues"/>
</dbReference>
<dbReference type="GO" id="GO:0005789">
    <property type="term" value="C:endoplasmic reticulum membrane"/>
    <property type="evidence" value="ECO:0000318"/>
    <property type="project" value="GO_Central"/>
</dbReference>
<dbReference type="GO" id="GO:0000139">
    <property type="term" value="C:Golgi membrane"/>
    <property type="evidence" value="ECO:0000318"/>
    <property type="project" value="GO_Central"/>
</dbReference>
<dbReference type="GO" id="GO:0005459">
    <property type="term" value="F:UDP-galactose transmembrane transporter activity"/>
    <property type="evidence" value="ECO:0000318"/>
    <property type="project" value="GO_Central"/>
</dbReference>
<dbReference type="GO" id="GO:0005460">
    <property type="term" value="F:UDP-glucose transmembrane transporter activity"/>
    <property type="evidence" value="ECO:0000318"/>
    <property type="project" value="GO_Central"/>
</dbReference>
<dbReference type="GO" id="GO:0072334">
    <property type="term" value="P:UDP-galactose transmembrane transport"/>
    <property type="evidence" value="ECO:0000318"/>
    <property type="project" value="GO_Central"/>
</dbReference>
<dbReference type="InterPro" id="IPR013657">
    <property type="entry name" value="SCL35B1-4/HUT1"/>
</dbReference>
<dbReference type="PANTHER" id="PTHR10778">
    <property type="entry name" value="SOLUTE CARRIER FAMILY 35 MEMBER B"/>
    <property type="match status" value="1"/>
</dbReference>
<dbReference type="PANTHER" id="PTHR10778:SF10">
    <property type="entry name" value="SOLUTE CARRIER FAMILY 35 MEMBER B1"/>
    <property type="match status" value="1"/>
</dbReference>
<dbReference type="Pfam" id="PF08449">
    <property type="entry name" value="UAA"/>
    <property type="match status" value="1"/>
</dbReference>
<dbReference type="SUPFAM" id="SSF103481">
    <property type="entry name" value="Multidrug resistance efflux transporter EmrE"/>
    <property type="match status" value="2"/>
</dbReference>
<name>S35B1_XENLA</name>
<protein>
    <recommendedName>
        <fullName>Solute carrier family 35 member B1</fullName>
    </recommendedName>
    <alternativeName>
        <fullName>Endoplasmic reticulum nucleotide sugar transporter 1</fullName>
    </alternativeName>
</protein>
<evidence type="ECO:0000250" key="1"/>
<evidence type="ECO:0000255" key="2"/>
<evidence type="ECO:0000305" key="3"/>
<feature type="chain" id="PRO_0000213371" description="Solute carrier family 35 member B1">
    <location>
        <begin position="1"/>
        <end position="320"/>
    </location>
</feature>
<feature type="transmembrane region" description="Helical" evidence="2">
    <location>
        <begin position="9"/>
        <end position="29"/>
    </location>
</feature>
<feature type="transmembrane region" description="Helical" evidence="2">
    <location>
        <begin position="49"/>
        <end position="69"/>
    </location>
</feature>
<feature type="transmembrane region" description="Helical" evidence="2">
    <location>
        <begin position="81"/>
        <end position="103"/>
    </location>
</feature>
<feature type="transmembrane region" description="Helical" evidence="2">
    <location>
        <begin position="134"/>
        <end position="154"/>
    </location>
</feature>
<feature type="transmembrane region" description="Helical" evidence="2">
    <location>
        <begin position="166"/>
        <end position="186"/>
    </location>
</feature>
<feature type="transmembrane region" description="Helical" evidence="2">
    <location>
        <begin position="202"/>
        <end position="222"/>
    </location>
</feature>
<feature type="transmembrane region" description="Helical" evidence="2">
    <location>
        <begin position="241"/>
        <end position="261"/>
    </location>
</feature>
<feature type="transmembrane region" description="Helical" evidence="2">
    <location>
        <begin position="283"/>
        <end position="303"/>
    </location>
</feature>
<feature type="short sequence motif" description="Di-lysine motif">
    <location>
        <begin position="316"/>
        <end position="320"/>
    </location>
</feature>
<feature type="sequence conflict" description="In Ref. 1; CAD44563." evidence="3" ref="1">
    <original>Y</original>
    <variation>H</variation>
    <location>
        <position position="190"/>
    </location>
</feature>
<feature type="sequence conflict" description="In Ref. 1; CAD44563." evidence="3" ref="1">
    <original>S</original>
    <variation>N</variation>
    <location>
        <position position="205"/>
    </location>
</feature>
<feature type="sequence conflict" description="In Ref. 1; CAD44563." evidence="3" ref="1">
    <original>L</original>
    <variation>M</variation>
    <location>
        <position position="208"/>
    </location>
</feature>
<feature type="sequence conflict" description="In Ref. 1; CAD44563." evidence="3" ref="1">
    <original>L</original>
    <variation>F</variation>
    <location>
        <position position="220"/>
    </location>
</feature>
<feature type="sequence conflict" description="In Ref. 1; CAD44563." evidence="3" ref="1">
    <original>D</original>
    <variation>E</variation>
    <location>
        <position position="226"/>
    </location>
</feature>
<feature type="sequence conflict" description="In Ref. 1; CAD44563." evidence="3" ref="1">
    <original>V</original>
    <variation>L</variation>
    <location>
        <position position="242"/>
    </location>
</feature>
<feature type="sequence conflict" description="In Ref. 1; CAD44563." evidence="3" ref="1">
    <original>L</original>
    <variation>I</variation>
    <location>
        <position position="299"/>
    </location>
</feature>
<reference key="1">
    <citation type="journal article" date="2003" name="Biochimie">
        <title>The nucleotide-sugar transporter family: a phylogenetic approach.</title>
        <authorList>
            <person name="Martinez-Duncker I."/>
            <person name="Mollicone R."/>
            <person name="Codogno P."/>
            <person name="Oriol R."/>
        </authorList>
    </citation>
    <scope>NUCLEOTIDE SEQUENCE [MRNA]</scope>
    <scope>GENE FAMILY</scope>
</reference>
<reference key="2">
    <citation type="submission" date="2004-07" db="EMBL/GenBank/DDBJ databases">
        <authorList>
            <consortium name="NIH - Xenopus Gene Collection (XGC) project"/>
        </authorList>
    </citation>
    <scope>NUCLEOTIDE SEQUENCE [LARGE SCALE MRNA]</scope>
    <source>
        <tissue>Oocyte</tissue>
        <tissue>Ovary</tissue>
    </source>
</reference>
<keyword id="KW-0256">Endoplasmic reticulum</keyword>
<keyword id="KW-0472">Membrane</keyword>
<keyword id="KW-1185">Reference proteome</keyword>
<keyword id="KW-0762">Sugar transport</keyword>
<keyword id="KW-0812">Transmembrane</keyword>
<keyword id="KW-1133">Transmembrane helix</keyword>
<keyword id="KW-0813">Transport</keyword>